<proteinExistence type="inferred from homology"/>
<organism>
    <name type="scientific">Escherichia coli O6:H1 (strain CFT073 / ATCC 700928 / UPEC)</name>
    <dbReference type="NCBI Taxonomy" id="199310"/>
    <lineage>
        <taxon>Bacteria</taxon>
        <taxon>Pseudomonadati</taxon>
        <taxon>Pseudomonadota</taxon>
        <taxon>Gammaproteobacteria</taxon>
        <taxon>Enterobacterales</taxon>
        <taxon>Enterobacteriaceae</taxon>
        <taxon>Escherichia</taxon>
    </lineage>
</organism>
<evidence type="ECO:0000255" key="1">
    <source>
        <dbReference type="HAMAP-Rule" id="MF_00333"/>
    </source>
</evidence>
<evidence type="ECO:0000305" key="2"/>
<name>HEM6_ECOL6</name>
<keyword id="KW-0963">Cytoplasm</keyword>
<keyword id="KW-0350">Heme biosynthesis</keyword>
<keyword id="KW-0464">Manganese</keyword>
<keyword id="KW-0479">Metal-binding</keyword>
<keyword id="KW-0560">Oxidoreductase</keyword>
<keyword id="KW-0627">Porphyrin biosynthesis</keyword>
<keyword id="KW-1185">Reference proteome</keyword>
<reference key="1">
    <citation type="journal article" date="2002" name="Proc. Natl. Acad. Sci. U.S.A.">
        <title>Extensive mosaic structure revealed by the complete genome sequence of uropathogenic Escherichia coli.</title>
        <authorList>
            <person name="Welch R.A."/>
            <person name="Burland V."/>
            <person name="Plunkett G. III"/>
            <person name="Redford P."/>
            <person name="Roesch P."/>
            <person name="Rasko D."/>
            <person name="Buckles E.L."/>
            <person name="Liou S.-R."/>
            <person name="Boutin A."/>
            <person name="Hackett J."/>
            <person name="Stroud D."/>
            <person name="Mayhew G.F."/>
            <person name="Rose D.J."/>
            <person name="Zhou S."/>
            <person name="Schwartz D.C."/>
            <person name="Perna N.T."/>
            <person name="Mobley H.L.T."/>
            <person name="Donnenberg M.S."/>
            <person name="Blattner F.R."/>
        </authorList>
    </citation>
    <scope>NUCLEOTIDE SEQUENCE [LARGE SCALE GENOMIC DNA]</scope>
    <source>
        <strain>CFT073 / ATCC 700928 / UPEC</strain>
    </source>
</reference>
<sequence>MKPDAHQVKQFLLNLQDTICQQLSAVDGAEFVEDSWQREAGGGGRSRVLRNGGVFEQAGVNFSHVHGEAMPASATAHRPELAGRSFEAMGVSLVVHPHNPYVPTSHANVRFFIAEKPGAEPVWWFGGGFDLTPFYGFEEDAIHWHRTARDLCLPFGEDVYPRYKKWCDEYFYLKHRNEQRGIGGLFFDDLNTPDFDHCFAFMQAVGKGYTDAYLPIVERRKAMAYGERERNFQLYRRGRYVEFNLVWDRGTLFGLQTGGRTESILMSMPPLVRWEYDYQPKDGSPEAALSEFIKVRDWV</sequence>
<comment type="function">
    <text evidence="1">Involved in the heme biosynthesis. Catalyzes the aerobic oxidative decarboxylation of propionate groups of rings A and B of coproporphyrinogen-III to yield the vinyl groups in protoporphyrinogen-IX.</text>
</comment>
<comment type="catalytic activity">
    <reaction evidence="1">
        <text>coproporphyrinogen III + O2 + 2 H(+) = protoporphyrinogen IX + 2 CO2 + 2 H2O</text>
        <dbReference type="Rhea" id="RHEA:18257"/>
        <dbReference type="ChEBI" id="CHEBI:15377"/>
        <dbReference type="ChEBI" id="CHEBI:15378"/>
        <dbReference type="ChEBI" id="CHEBI:15379"/>
        <dbReference type="ChEBI" id="CHEBI:16526"/>
        <dbReference type="ChEBI" id="CHEBI:57307"/>
        <dbReference type="ChEBI" id="CHEBI:57309"/>
        <dbReference type="EC" id="1.3.3.3"/>
    </reaction>
</comment>
<comment type="cofactor">
    <cofactor evidence="1">
        <name>Mn(2+)</name>
        <dbReference type="ChEBI" id="CHEBI:29035"/>
    </cofactor>
</comment>
<comment type="pathway">
    <text evidence="1">Porphyrin-containing compound metabolism; protoporphyrin-IX biosynthesis; protoporphyrinogen-IX from coproporphyrinogen-III (O2 route): step 1/1.</text>
</comment>
<comment type="subunit">
    <text evidence="1">Homodimer.</text>
</comment>
<comment type="subcellular location">
    <subcellularLocation>
        <location evidence="1">Cytoplasm</location>
    </subcellularLocation>
</comment>
<comment type="similarity">
    <text evidence="1">Belongs to the aerobic coproporphyrinogen-III oxidase family.</text>
</comment>
<comment type="sequence caution" evidence="2">
    <conflict type="erroneous initiation">
        <sequence resource="EMBL-CDS" id="AAN81420"/>
    </conflict>
    <text>Extended N-terminus.</text>
</comment>
<protein>
    <recommendedName>
        <fullName evidence="1">Oxygen-dependent coproporphyrinogen-III oxidase</fullName>
        <shortName evidence="1">CPO</shortName>
        <shortName evidence="1">Coprogen oxidase</shortName>
        <shortName evidence="1">Coproporphyrinogenase</shortName>
        <ecNumber evidence="1">1.3.3.3</ecNumber>
    </recommendedName>
</protein>
<feature type="chain" id="PRO_0000109895" description="Oxygen-dependent coproporphyrinogen-III oxidase">
    <location>
        <begin position="1"/>
        <end position="299"/>
    </location>
</feature>
<feature type="region of interest" description="Important for dimerization" evidence="1">
    <location>
        <begin position="240"/>
        <end position="275"/>
    </location>
</feature>
<feature type="active site" description="Proton donor" evidence="1">
    <location>
        <position position="106"/>
    </location>
</feature>
<feature type="binding site" evidence="1">
    <location>
        <position position="92"/>
    </location>
    <ligand>
        <name>substrate</name>
    </ligand>
</feature>
<feature type="binding site" evidence="1">
    <location>
        <position position="96"/>
    </location>
    <ligand>
        <name>Mn(2+)</name>
        <dbReference type="ChEBI" id="CHEBI:29035"/>
    </ligand>
</feature>
<feature type="binding site" evidence="1">
    <location>
        <position position="106"/>
    </location>
    <ligand>
        <name>Mn(2+)</name>
        <dbReference type="ChEBI" id="CHEBI:29035"/>
    </ligand>
</feature>
<feature type="binding site" evidence="1">
    <location>
        <begin position="108"/>
        <end position="110"/>
    </location>
    <ligand>
        <name>substrate</name>
    </ligand>
</feature>
<feature type="binding site" evidence="1">
    <location>
        <position position="145"/>
    </location>
    <ligand>
        <name>Mn(2+)</name>
        <dbReference type="ChEBI" id="CHEBI:29035"/>
    </ligand>
</feature>
<feature type="binding site" evidence="1">
    <location>
        <position position="175"/>
    </location>
    <ligand>
        <name>Mn(2+)</name>
        <dbReference type="ChEBI" id="CHEBI:29035"/>
    </ligand>
</feature>
<feature type="binding site" evidence="1">
    <location>
        <begin position="258"/>
        <end position="260"/>
    </location>
    <ligand>
        <name>substrate</name>
    </ligand>
</feature>
<feature type="site" description="Important for dimerization" evidence="1">
    <location>
        <position position="175"/>
    </location>
</feature>
<dbReference type="EC" id="1.3.3.3" evidence="1"/>
<dbReference type="EMBL" id="AE014075">
    <property type="protein sequence ID" value="AAN81420.1"/>
    <property type="status" value="ALT_INIT"/>
    <property type="molecule type" value="Genomic_DNA"/>
</dbReference>
<dbReference type="RefSeq" id="WP_001298446.1">
    <property type="nucleotide sequence ID" value="NZ_CP051263.1"/>
</dbReference>
<dbReference type="SMR" id="Q8FFA3"/>
<dbReference type="STRING" id="199310.c2970"/>
<dbReference type="KEGG" id="ecc:c2970"/>
<dbReference type="eggNOG" id="COG0408">
    <property type="taxonomic scope" value="Bacteria"/>
</dbReference>
<dbReference type="HOGENOM" id="CLU_026169_0_1_6"/>
<dbReference type="UniPathway" id="UPA00251">
    <property type="reaction ID" value="UER00322"/>
</dbReference>
<dbReference type="Proteomes" id="UP000001410">
    <property type="component" value="Chromosome"/>
</dbReference>
<dbReference type="GO" id="GO:0005737">
    <property type="term" value="C:cytoplasm"/>
    <property type="evidence" value="ECO:0007669"/>
    <property type="project" value="UniProtKB-SubCell"/>
</dbReference>
<dbReference type="GO" id="GO:0004109">
    <property type="term" value="F:coproporphyrinogen oxidase activity"/>
    <property type="evidence" value="ECO:0007669"/>
    <property type="project" value="UniProtKB-UniRule"/>
</dbReference>
<dbReference type="GO" id="GO:0030145">
    <property type="term" value="F:manganese ion binding"/>
    <property type="evidence" value="ECO:0007669"/>
    <property type="project" value="UniProtKB-UniRule"/>
</dbReference>
<dbReference type="GO" id="GO:0042803">
    <property type="term" value="F:protein homodimerization activity"/>
    <property type="evidence" value="ECO:0000250"/>
    <property type="project" value="UniProtKB"/>
</dbReference>
<dbReference type="GO" id="GO:0006782">
    <property type="term" value="P:protoporphyrinogen IX biosynthetic process"/>
    <property type="evidence" value="ECO:0007669"/>
    <property type="project" value="UniProtKB-UniRule"/>
</dbReference>
<dbReference type="FunFam" id="3.40.1500.10:FF:000001">
    <property type="entry name" value="Oxygen-dependent coproporphyrinogen-III oxidase"/>
    <property type="match status" value="1"/>
</dbReference>
<dbReference type="Gene3D" id="3.40.1500.10">
    <property type="entry name" value="Coproporphyrinogen III oxidase, aerobic"/>
    <property type="match status" value="1"/>
</dbReference>
<dbReference type="HAMAP" id="MF_00333">
    <property type="entry name" value="Coprogen_oxidas"/>
    <property type="match status" value="1"/>
</dbReference>
<dbReference type="InterPro" id="IPR001260">
    <property type="entry name" value="Coprogen_oxidase_aer"/>
</dbReference>
<dbReference type="InterPro" id="IPR036406">
    <property type="entry name" value="Coprogen_oxidase_aer_sf"/>
</dbReference>
<dbReference type="InterPro" id="IPR018375">
    <property type="entry name" value="Coprogen_oxidase_CS"/>
</dbReference>
<dbReference type="NCBIfam" id="NF003727">
    <property type="entry name" value="PRK05330.1"/>
    <property type="match status" value="1"/>
</dbReference>
<dbReference type="PANTHER" id="PTHR10755">
    <property type="entry name" value="COPROPORPHYRINOGEN III OXIDASE, MITOCHONDRIAL"/>
    <property type="match status" value="1"/>
</dbReference>
<dbReference type="PANTHER" id="PTHR10755:SF0">
    <property type="entry name" value="OXYGEN-DEPENDENT COPROPORPHYRINOGEN-III OXIDASE, MITOCHONDRIAL"/>
    <property type="match status" value="1"/>
</dbReference>
<dbReference type="Pfam" id="PF01218">
    <property type="entry name" value="Coprogen_oxidas"/>
    <property type="match status" value="1"/>
</dbReference>
<dbReference type="PIRSF" id="PIRSF000166">
    <property type="entry name" value="Coproporphyri_ox"/>
    <property type="match status" value="1"/>
</dbReference>
<dbReference type="PRINTS" id="PR00073">
    <property type="entry name" value="COPRGNOXDASE"/>
</dbReference>
<dbReference type="SUPFAM" id="SSF102886">
    <property type="entry name" value="Coproporphyrinogen III oxidase"/>
    <property type="match status" value="1"/>
</dbReference>
<dbReference type="PROSITE" id="PS01021">
    <property type="entry name" value="COPROGEN_OXIDASE"/>
    <property type="match status" value="1"/>
</dbReference>
<gene>
    <name evidence="1" type="primary">hemF</name>
    <name type="ordered locus">c2970</name>
</gene>
<accession>Q8FFA3</accession>